<comment type="function">
    <text evidence="1">Catalyzes the dephosphorylation of undecaprenyl diphosphate (UPP). Confers resistance to bacitracin.</text>
</comment>
<comment type="catalytic activity">
    <reaction evidence="1">
        <text>di-trans,octa-cis-undecaprenyl diphosphate + H2O = di-trans,octa-cis-undecaprenyl phosphate + phosphate + H(+)</text>
        <dbReference type="Rhea" id="RHEA:28094"/>
        <dbReference type="ChEBI" id="CHEBI:15377"/>
        <dbReference type="ChEBI" id="CHEBI:15378"/>
        <dbReference type="ChEBI" id="CHEBI:43474"/>
        <dbReference type="ChEBI" id="CHEBI:58405"/>
        <dbReference type="ChEBI" id="CHEBI:60392"/>
        <dbReference type="EC" id="3.6.1.27"/>
    </reaction>
</comment>
<comment type="subcellular location">
    <subcellularLocation>
        <location evidence="1">Cell membrane</location>
        <topology evidence="1">Multi-pass membrane protein</topology>
    </subcellularLocation>
</comment>
<comment type="miscellaneous">
    <text>Bacitracin is thought to be involved in the inhibition of peptidoglycan synthesis by sequestering undecaprenyl diphosphate, thereby reducing the pool of lipid carrier available.</text>
</comment>
<comment type="similarity">
    <text evidence="1">Belongs to the UppP family.</text>
</comment>
<organism>
    <name type="scientific">Deinococcus geothermalis (strain DSM 11300 / CIP 105573 / AG-3a)</name>
    <dbReference type="NCBI Taxonomy" id="319795"/>
    <lineage>
        <taxon>Bacteria</taxon>
        <taxon>Thermotogati</taxon>
        <taxon>Deinococcota</taxon>
        <taxon>Deinococci</taxon>
        <taxon>Deinococcales</taxon>
        <taxon>Deinococcaceae</taxon>
        <taxon>Deinococcus</taxon>
    </lineage>
</organism>
<accession>Q1IZI4</accession>
<name>UPPP_DEIGD</name>
<evidence type="ECO:0000255" key="1">
    <source>
        <dbReference type="HAMAP-Rule" id="MF_01006"/>
    </source>
</evidence>
<sequence length="274" mass="29667">MDWFYAIIYGIVEGITEFLPISSTGHLIVAGNLMGVPWSKEIRDTFEVVIQGGAILAVLAYYWRDFAGQARVIGHDRPTQRLWLGVIVGVIPAVVLGVLFGDVIKAHLFRPSVVAWALIVGGVLMWVIENRKAPPVVHDLKQIGLGRAFLIGAAQCLALLWPGFSRSASSILGGMVMGLDRPTATRFSFYLGIPTLGGAALLDFIKSRHLLAEIGLLNVFLGAAVSFVVAYLAIGWLLRFVSQHNFKGFAVYRVIFGLLILLLVASGRLANGGL</sequence>
<dbReference type="EC" id="3.6.1.27" evidence="1"/>
<dbReference type="EMBL" id="CP000359">
    <property type="protein sequence ID" value="ABF45350.1"/>
    <property type="molecule type" value="Genomic_DNA"/>
</dbReference>
<dbReference type="RefSeq" id="WP_011530187.1">
    <property type="nucleotide sequence ID" value="NC_008025.1"/>
</dbReference>
<dbReference type="SMR" id="Q1IZI4"/>
<dbReference type="STRING" id="319795.Dgeo_1051"/>
<dbReference type="KEGG" id="dge:Dgeo_1051"/>
<dbReference type="eggNOG" id="COG1968">
    <property type="taxonomic scope" value="Bacteria"/>
</dbReference>
<dbReference type="HOGENOM" id="CLU_060296_2_0_0"/>
<dbReference type="Proteomes" id="UP000002431">
    <property type="component" value="Chromosome"/>
</dbReference>
<dbReference type="GO" id="GO:0005886">
    <property type="term" value="C:plasma membrane"/>
    <property type="evidence" value="ECO:0007669"/>
    <property type="project" value="UniProtKB-SubCell"/>
</dbReference>
<dbReference type="GO" id="GO:0050380">
    <property type="term" value="F:undecaprenyl-diphosphatase activity"/>
    <property type="evidence" value="ECO:0007669"/>
    <property type="project" value="UniProtKB-UniRule"/>
</dbReference>
<dbReference type="GO" id="GO:0071555">
    <property type="term" value="P:cell wall organization"/>
    <property type="evidence" value="ECO:0007669"/>
    <property type="project" value="UniProtKB-KW"/>
</dbReference>
<dbReference type="GO" id="GO:0009252">
    <property type="term" value="P:peptidoglycan biosynthetic process"/>
    <property type="evidence" value="ECO:0007669"/>
    <property type="project" value="UniProtKB-KW"/>
</dbReference>
<dbReference type="GO" id="GO:0008360">
    <property type="term" value="P:regulation of cell shape"/>
    <property type="evidence" value="ECO:0007669"/>
    <property type="project" value="UniProtKB-KW"/>
</dbReference>
<dbReference type="GO" id="GO:0046677">
    <property type="term" value="P:response to antibiotic"/>
    <property type="evidence" value="ECO:0007669"/>
    <property type="project" value="UniProtKB-UniRule"/>
</dbReference>
<dbReference type="HAMAP" id="MF_01006">
    <property type="entry name" value="Undec_diphosphatase"/>
    <property type="match status" value="1"/>
</dbReference>
<dbReference type="InterPro" id="IPR003824">
    <property type="entry name" value="UppP"/>
</dbReference>
<dbReference type="NCBIfam" id="NF001389">
    <property type="entry name" value="PRK00281.1-2"/>
    <property type="match status" value="1"/>
</dbReference>
<dbReference type="NCBIfam" id="NF001390">
    <property type="entry name" value="PRK00281.1-4"/>
    <property type="match status" value="1"/>
</dbReference>
<dbReference type="NCBIfam" id="TIGR00753">
    <property type="entry name" value="undec_PP_bacA"/>
    <property type="match status" value="1"/>
</dbReference>
<dbReference type="PANTHER" id="PTHR30622">
    <property type="entry name" value="UNDECAPRENYL-DIPHOSPHATASE"/>
    <property type="match status" value="1"/>
</dbReference>
<dbReference type="PANTHER" id="PTHR30622:SF3">
    <property type="entry name" value="UNDECAPRENYL-DIPHOSPHATASE"/>
    <property type="match status" value="1"/>
</dbReference>
<dbReference type="Pfam" id="PF02673">
    <property type="entry name" value="BacA"/>
    <property type="match status" value="1"/>
</dbReference>
<protein>
    <recommendedName>
        <fullName evidence="1">Undecaprenyl-diphosphatase</fullName>
        <ecNumber evidence="1">3.6.1.27</ecNumber>
    </recommendedName>
    <alternativeName>
        <fullName evidence="1">Bacitracin resistance protein</fullName>
    </alternativeName>
    <alternativeName>
        <fullName evidence="1">Undecaprenyl pyrophosphate phosphatase</fullName>
    </alternativeName>
</protein>
<keyword id="KW-0046">Antibiotic resistance</keyword>
<keyword id="KW-1003">Cell membrane</keyword>
<keyword id="KW-0133">Cell shape</keyword>
<keyword id="KW-0961">Cell wall biogenesis/degradation</keyword>
<keyword id="KW-0378">Hydrolase</keyword>
<keyword id="KW-0472">Membrane</keyword>
<keyword id="KW-0573">Peptidoglycan synthesis</keyword>
<keyword id="KW-0812">Transmembrane</keyword>
<keyword id="KW-1133">Transmembrane helix</keyword>
<gene>
    <name evidence="1" type="primary">uppP</name>
    <name type="ordered locus">Dgeo_1051</name>
</gene>
<reference key="1">
    <citation type="submission" date="2006-04" db="EMBL/GenBank/DDBJ databases">
        <title>Complete sequence of chromosome of Deinococcus geothermalis DSM 11300.</title>
        <authorList>
            <person name="Copeland A."/>
            <person name="Lucas S."/>
            <person name="Lapidus A."/>
            <person name="Barry K."/>
            <person name="Detter J.C."/>
            <person name="Glavina del Rio T."/>
            <person name="Hammon N."/>
            <person name="Israni S."/>
            <person name="Dalin E."/>
            <person name="Tice H."/>
            <person name="Pitluck S."/>
            <person name="Brettin T."/>
            <person name="Bruce D."/>
            <person name="Han C."/>
            <person name="Tapia R."/>
            <person name="Saunders E."/>
            <person name="Gilna P."/>
            <person name="Schmutz J."/>
            <person name="Larimer F."/>
            <person name="Land M."/>
            <person name="Hauser L."/>
            <person name="Kyrpides N."/>
            <person name="Kim E."/>
            <person name="Daly M.J."/>
            <person name="Fredrickson J.K."/>
            <person name="Makarova K.S."/>
            <person name="Gaidamakova E.K."/>
            <person name="Zhai M."/>
            <person name="Richardson P."/>
        </authorList>
    </citation>
    <scope>NUCLEOTIDE SEQUENCE [LARGE SCALE GENOMIC DNA]</scope>
    <source>
        <strain>DSM 11300 / CIP 105573 / AG-3a</strain>
    </source>
</reference>
<proteinExistence type="inferred from homology"/>
<feature type="chain" id="PRO_0000250233" description="Undecaprenyl-diphosphatase">
    <location>
        <begin position="1"/>
        <end position="274"/>
    </location>
</feature>
<feature type="transmembrane region" description="Helical" evidence="1">
    <location>
        <begin position="1"/>
        <end position="21"/>
    </location>
</feature>
<feature type="transmembrane region" description="Helical" evidence="1">
    <location>
        <begin position="48"/>
        <end position="68"/>
    </location>
</feature>
<feature type="transmembrane region" description="Helical" evidence="1">
    <location>
        <begin position="84"/>
        <end position="104"/>
    </location>
</feature>
<feature type="transmembrane region" description="Helical" evidence="1">
    <location>
        <begin position="108"/>
        <end position="128"/>
    </location>
</feature>
<feature type="transmembrane region" description="Helical" evidence="1">
    <location>
        <begin position="143"/>
        <end position="163"/>
    </location>
</feature>
<feature type="transmembrane region" description="Helical" evidence="1">
    <location>
        <begin position="187"/>
        <end position="207"/>
    </location>
</feature>
<feature type="transmembrane region" description="Helical" evidence="1">
    <location>
        <begin position="214"/>
        <end position="234"/>
    </location>
</feature>
<feature type="transmembrane region" description="Helical" evidence="1">
    <location>
        <begin position="254"/>
        <end position="274"/>
    </location>
</feature>